<sequence length="203" mass="22551">MRRAILLILTLTVGTSLAAGFSQKDTPINTRYRETPEEAAAREFKEHTAELPPLPDAHSDGWFDIYVDENYGKQPKILLDSLQIMPAPDGSIRYILNIRSDKGYDNLTAEGIFCARSSIGFGNGKLSSYKVFGYGDTVNSRWIQPRNAEWKPIGGTLGRNDALRAVLYQAFCEGGVPADTQGLVQRLKERAGRYAPSMKPHDK</sequence>
<gene>
    <name evidence="2 3" type="primary">cnp1</name>
    <name evidence="7" type="ORF">NGO_0250</name>
</gene>
<proteinExistence type="inferred from homology"/>
<reference key="1">
    <citation type="submission" date="2003-03" db="EMBL/GenBank/DDBJ databases">
        <title>The complete genome sequence of Neisseria gonorrhoeae.</title>
        <authorList>
            <person name="Lewis L.A."/>
            <person name="Gillaspy A.F."/>
            <person name="McLaughlin R.E."/>
            <person name="Gipson M."/>
            <person name="Ducey T.F."/>
            <person name="Ownbey T."/>
            <person name="Hartman K."/>
            <person name="Nydick C."/>
            <person name="Carson M.B."/>
            <person name="Vaughn J."/>
            <person name="Thomson C."/>
            <person name="Song L."/>
            <person name="Lin S."/>
            <person name="Yuan X."/>
            <person name="Najar F."/>
            <person name="Zhan M."/>
            <person name="Ren Q."/>
            <person name="Zhu H."/>
            <person name="Qi S."/>
            <person name="Kenton S.M."/>
            <person name="Lai H."/>
            <person name="White J.D."/>
            <person name="Clifton S."/>
            <person name="Roe B.A."/>
            <person name="Dyer D.W."/>
        </authorList>
    </citation>
    <scope>NUCLEOTIDE SEQUENCE [LARGE SCALE GENOMIC DNA]</scope>
    <source>
        <strain>ATCC 700825 / FA 1090</strain>
    </source>
</reference>
<reference key="2">
    <citation type="journal article" date="1992" name="Infect. Immun.">
        <title>Characterization of a cryptic gene pair from Neisseria gonorrhoeae that is common to pathogenic Neisseria species.</title>
        <authorList>
            <person name="Seifert H.S."/>
            <person name="Wilson D."/>
        </authorList>
    </citation>
    <scope>POSSIBLE SUBCELLULAR LOCATION</scope>
    <source>
        <strain>MS11</strain>
    </source>
</reference>
<reference key="3">
    <citation type="journal article" date="1994" name="J. Bacteriol.">
        <title>Locations of genetic markers on the physical map of the chromosome of Neisseria gonorrhoeae FA1090.</title>
        <authorList>
            <person name="Dempsey J.A."/>
            <person name="Cannon J.G."/>
        </authorList>
    </citation>
    <scope>GENE NAME</scope>
    <source>
        <strain>ATCC 700825 / FA 1090</strain>
    </source>
</reference>
<keyword id="KW-0963">Cytoplasm</keyword>
<keyword id="KW-0574">Periplasm</keyword>
<keyword id="KW-1185">Reference proteome</keyword>
<keyword id="KW-0732">Signal</keyword>
<name>CNP1_NEIG1</name>
<organism>
    <name type="scientific">Neisseria gonorrhoeae (strain ATCC 700825 / FA 1090)</name>
    <dbReference type="NCBI Taxonomy" id="242231"/>
    <lineage>
        <taxon>Bacteria</taxon>
        <taxon>Pseudomonadati</taxon>
        <taxon>Pseudomonadota</taxon>
        <taxon>Betaproteobacteria</taxon>
        <taxon>Neisseriales</taxon>
        <taxon>Neisseriaceae</taxon>
        <taxon>Neisseria</taxon>
    </lineage>
</organism>
<protein>
    <recommendedName>
        <fullName evidence="6">Cryptic neisserial protein 1</fullName>
        <shortName evidence="6">Cnp1</shortName>
    </recommendedName>
</protein>
<dbReference type="EMBL" id="AE004969">
    <property type="protein sequence ID" value="AAW89003.1"/>
    <property type="molecule type" value="Genomic_DNA"/>
</dbReference>
<dbReference type="RefSeq" id="WP_003692687.1">
    <property type="nucleotide sequence ID" value="NC_002946.2"/>
</dbReference>
<dbReference type="RefSeq" id="YP_207415.1">
    <property type="nucleotide sequence ID" value="NC_002946.2"/>
</dbReference>
<dbReference type="STRING" id="242231.NGO_0250"/>
<dbReference type="DNASU" id="3281541"/>
<dbReference type="KEGG" id="ngo:NGO_0250"/>
<dbReference type="PATRIC" id="fig|242231.10.peg.308"/>
<dbReference type="HOGENOM" id="CLU_099352_1_0_4"/>
<dbReference type="Proteomes" id="UP000000535">
    <property type="component" value="Chromosome"/>
</dbReference>
<dbReference type="GO" id="GO:0008233">
    <property type="term" value="F:peptidase activity"/>
    <property type="evidence" value="ECO:0007669"/>
    <property type="project" value="UniProtKB-KW"/>
</dbReference>
<dbReference type="GO" id="GO:0006508">
    <property type="term" value="P:proteolysis"/>
    <property type="evidence" value="ECO:0007669"/>
    <property type="project" value="UniProtKB-KW"/>
</dbReference>
<dbReference type="InterPro" id="IPR014861">
    <property type="entry name" value="CNP1-like_dom"/>
</dbReference>
<dbReference type="Pfam" id="PF08750">
    <property type="entry name" value="CNP1"/>
    <property type="match status" value="1"/>
</dbReference>
<comment type="subcellular location">
    <subcellularLocation>
        <location evidence="6">Periplasm</location>
    </subcellularLocation>
    <subcellularLocation>
        <location evidence="6">Cytoplasm</location>
    </subcellularLocation>
    <text evidence="6">Detected upon expression in E.coli, no protein was detected in N.gonorrhoeae.</text>
</comment>
<comment type="miscellaneous">
    <text evidence="4 5">Was suggested to be clpB (Ref.1), but this protein is not that chaperone.</text>
</comment>
<comment type="similarity">
    <text evidence="5">Belongs to the Cnp family.</text>
</comment>
<accession>Q5F9Y4</accession>
<evidence type="ECO:0000255" key="1"/>
<evidence type="ECO:0000303" key="2">
    <source>
    </source>
</evidence>
<evidence type="ECO:0000303" key="3">
    <source>
    </source>
</evidence>
<evidence type="ECO:0000303" key="4">
    <source ref="1"/>
</evidence>
<evidence type="ECO:0000305" key="5"/>
<evidence type="ECO:0000305" key="6">
    <source>
    </source>
</evidence>
<evidence type="ECO:0000312" key="7">
    <source>
        <dbReference type="EMBL" id="AAW89003.1"/>
    </source>
</evidence>
<feature type="signal peptide" evidence="1">
    <location>
        <begin position="1"/>
        <end position="18"/>
    </location>
</feature>
<feature type="chain" id="PRO_5004256089" description="Cryptic neisserial protein 1" evidence="1">
    <location>
        <begin position="19"/>
        <end position="203"/>
    </location>
</feature>